<sequence>MRSVAVAMEQPLHGPPGLSTILARTDWAEPWLLGLAGFHVLCFLLTCFSFQHYRVQIGHFLCMVCLVYCAEYINELAAMNWRLFSKYQYFDSRGMFISLVFSAPLLVNTIIIVVNWVYRTLNVMTELKTLQQRIKAEKDKKK</sequence>
<keyword id="KW-0175">Coiled coil</keyword>
<keyword id="KW-0238">DNA-binding</keyword>
<keyword id="KW-0472">Membrane</keyword>
<keyword id="KW-0539">Nucleus</keyword>
<keyword id="KW-1185">Reference proteome</keyword>
<keyword id="KW-0812">Transmembrane</keyword>
<keyword id="KW-1133">Transmembrane helix</keyword>
<reference key="1">
    <citation type="journal article" date="2005" name="Genome Biol.">
        <title>Full-length cDNAs from chicken bursal lymphocytes to facilitate gene function analysis.</title>
        <authorList>
            <person name="Caldwell R.B."/>
            <person name="Kierzek A.M."/>
            <person name="Arakawa H."/>
            <person name="Bezzubov Y."/>
            <person name="Zaim J."/>
            <person name="Fiedler P."/>
            <person name="Kutter S."/>
            <person name="Blagodatski A."/>
            <person name="Kostovska D."/>
            <person name="Koter M."/>
            <person name="Plachy J."/>
            <person name="Carninci P."/>
            <person name="Hayashizaki Y."/>
            <person name="Buerstedde J.-M."/>
        </authorList>
    </citation>
    <scope>NUCLEOTIDE SEQUENCE [LARGE SCALE MRNA]</scope>
    <source>
        <strain>CB</strain>
        <tissue>Bursa of Fabricius</tissue>
    </source>
</reference>
<evidence type="ECO:0000250" key="1"/>
<evidence type="ECO:0000250" key="2">
    <source>
        <dbReference type="UniProtKB" id="Q96B42"/>
    </source>
</evidence>
<evidence type="ECO:0000255" key="3"/>
<evidence type="ECO:0000305" key="4"/>
<name>TMM18_CHICK</name>
<protein>
    <recommendedName>
        <fullName>Transmembrane protein 18</fullName>
    </recommendedName>
</protein>
<dbReference type="EMBL" id="AJ851490">
    <property type="protein sequence ID" value="CAH65124.1"/>
    <property type="molecule type" value="mRNA"/>
</dbReference>
<dbReference type="RefSeq" id="NP_001012716.1">
    <property type="nucleotide sequence ID" value="NM_001012698.2"/>
</dbReference>
<dbReference type="FunCoup" id="Q5F410">
    <property type="interactions" value="799"/>
</dbReference>
<dbReference type="STRING" id="9031.ENSGALP00000043187"/>
<dbReference type="PaxDb" id="9031-ENSGALP00000043187"/>
<dbReference type="GeneID" id="421911"/>
<dbReference type="KEGG" id="gga:421911"/>
<dbReference type="CTD" id="129787"/>
<dbReference type="VEuPathDB" id="HostDB:geneid_421911"/>
<dbReference type="eggNOG" id="ENOG502S2NZ">
    <property type="taxonomic scope" value="Eukaryota"/>
</dbReference>
<dbReference type="HOGENOM" id="CLU_101161_1_1_1"/>
<dbReference type="InParanoid" id="Q5F410"/>
<dbReference type="OMA" id="TFSKQQY"/>
<dbReference type="OrthoDB" id="411535at2759"/>
<dbReference type="PhylomeDB" id="Q5F410"/>
<dbReference type="TreeFam" id="TF324883"/>
<dbReference type="PRO" id="PR:Q5F410"/>
<dbReference type="Proteomes" id="UP000000539">
    <property type="component" value="Chromosome 3"/>
</dbReference>
<dbReference type="Bgee" id="ENSGALG00000028744">
    <property type="expression patterns" value="Expressed in spermatid and 14 other cell types or tissues"/>
</dbReference>
<dbReference type="GO" id="GO:0031965">
    <property type="term" value="C:nuclear membrane"/>
    <property type="evidence" value="ECO:0000250"/>
    <property type="project" value="UniProtKB"/>
</dbReference>
<dbReference type="GO" id="GO:0003677">
    <property type="term" value="F:DNA binding"/>
    <property type="evidence" value="ECO:0007669"/>
    <property type="project" value="UniProtKB-KW"/>
</dbReference>
<dbReference type="InterPro" id="IPR026721">
    <property type="entry name" value="TMEM18"/>
</dbReference>
<dbReference type="PANTHER" id="PTHR22593">
    <property type="entry name" value="TRANSMEMBRANE PROTEIN 18"/>
    <property type="match status" value="1"/>
</dbReference>
<dbReference type="PANTHER" id="PTHR22593:SF2">
    <property type="entry name" value="TRANSMEMBRANE PROTEIN 18"/>
    <property type="match status" value="1"/>
</dbReference>
<dbReference type="Pfam" id="PF14770">
    <property type="entry name" value="TMEM18"/>
    <property type="match status" value="1"/>
</dbReference>
<proteinExistence type="evidence at transcript level"/>
<feature type="chain" id="PRO_0000284372" description="Transmembrane protein 18">
    <location>
        <begin position="1"/>
        <end position="142"/>
    </location>
</feature>
<feature type="topological domain" description="Perinuclear space" evidence="3">
    <location>
        <begin position="1"/>
        <end position="29"/>
    </location>
</feature>
<feature type="transmembrane region" description="Helical" evidence="3">
    <location>
        <begin position="30"/>
        <end position="50"/>
    </location>
</feature>
<feature type="topological domain" description="Nuclear" evidence="3">
    <location>
        <begin position="51"/>
        <end position="56"/>
    </location>
</feature>
<feature type="transmembrane region" description="Helical" evidence="3">
    <location>
        <begin position="57"/>
        <end position="77"/>
    </location>
</feature>
<feature type="topological domain" description="Perinuclear space" evidence="3">
    <location>
        <begin position="78"/>
        <end position="93"/>
    </location>
</feature>
<feature type="transmembrane region" description="Helical" evidence="3">
    <location>
        <begin position="94"/>
        <end position="114"/>
    </location>
</feature>
<feature type="topological domain" description="Nuclear" evidence="3">
    <location>
        <begin position="115"/>
        <end position="142"/>
    </location>
</feature>
<feature type="region of interest" description="DNA-binding" evidence="1">
    <location>
        <begin position="115"/>
        <end position="142"/>
    </location>
</feature>
<feature type="coiled-coil region" evidence="3">
    <location>
        <begin position="120"/>
        <end position="142"/>
    </location>
</feature>
<accession>Q5F410</accession>
<comment type="subcellular location">
    <subcellularLocation>
        <location evidence="2">Nucleus membrane</location>
        <topology evidence="3">Multi-pass membrane protein</topology>
    </subcellularLocation>
</comment>
<comment type="similarity">
    <text evidence="4">Belongs to the TMEM18 family.</text>
</comment>
<organism>
    <name type="scientific">Gallus gallus</name>
    <name type="common">Chicken</name>
    <dbReference type="NCBI Taxonomy" id="9031"/>
    <lineage>
        <taxon>Eukaryota</taxon>
        <taxon>Metazoa</taxon>
        <taxon>Chordata</taxon>
        <taxon>Craniata</taxon>
        <taxon>Vertebrata</taxon>
        <taxon>Euteleostomi</taxon>
        <taxon>Archelosauria</taxon>
        <taxon>Archosauria</taxon>
        <taxon>Dinosauria</taxon>
        <taxon>Saurischia</taxon>
        <taxon>Theropoda</taxon>
        <taxon>Coelurosauria</taxon>
        <taxon>Aves</taxon>
        <taxon>Neognathae</taxon>
        <taxon>Galloanserae</taxon>
        <taxon>Galliformes</taxon>
        <taxon>Phasianidae</taxon>
        <taxon>Phasianinae</taxon>
        <taxon>Gallus</taxon>
    </lineage>
</organism>
<gene>
    <name type="primary">TMEM18</name>
    <name type="ORF">RCJMB04_3n22</name>
</gene>